<gene>
    <name evidence="1" type="primary">rplB</name>
    <name type="ordered locus">MLBr01860</name>
</gene>
<reference key="1">
    <citation type="journal article" date="2009" name="Nat. Genet.">
        <title>Comparative genomic and phylogeographic analysis of Mycobacterium leprae.</title>
        <authorList>
            <person name="Monot M."/>
            <person name="Honore N."/>
            <person name="Garnier T."/>
            <person name="Zidane N."/>
            <person name="Sherafi D."/>
            <person name="Paniz-Mondolfi A."/>
            <person name="Matsuoka M."/>
            <person name="Taylor G.M."/>
            <person name="Donoghue H.D."/>
            <person name="Bouwman A."/>
            <person name="Mays S."/>
            <person name="Watson C."/>
            <person name="Lockwood D."/>
            <person name="Khamispour A."/>
            <person name="Dowlati Y."/>
            <person name="Jianping S."/>
            <person name="Rea T.H."/>
            <person name="Vera-Cabrera L."/>
            <person name="Stefani M.M."/>
            <person name="Banu S."/>
            <person name="Macdonald M."/>
            <person name="Sapkota B.R."/>
            <person name="Spencer J.S."/>
            <person name="Thomas J."/>
            <person name="Harshman K."/>
            <person name="Singh P."/>
            <person name="Busso P."/>
            <person name="Gattiker A."/>
            <person name="Rougemont J."/>
            <person name="Brennan P.J."/>
            <person name="Cole S.T."/>
        </authorList>
    </citation>
    <scope>NUCLEOTIDE SEQUENCE [LARGE SCALE GENOMIC DNA]</scope>
    <source>
        <strain>Br4923</strain>
    </source>
</reference>
<dbReference type="EMBL" id="FM211192">
    <property type="protein sequence ID" value="CAR71956.1"/>
    <property type="molecule type" value="Genomic_DNA"/>
</dbReference>
<dbReference type="SMR" id="B8ZSB6"/>
<dbReference type="KEGG" id="mlb:MLBr01860"/>
<dbReference type="HOGENOM" id="CLU_036235_2_1_11"/>
<dbReference type="Proteomes" id="UP000006900">
    <property type="component" value="Chromosome"/>
</dbReference>
<dbReference type="GO" id="GO:0015934">
    <property type="term" value="C:large ribosomal subunit"/>
    <property type="evidence" value="ECO:0007669"/>
    <property type="project" value="InterPro"/>
</dbReference>
<dbReference type="GO" id="GO:0019843">
    <property type="term" value="F:rRNA binding"/>
    <property type="evidence" value="ECO:0007669"/>
    <property type="project" value="UniProtKB-UniRule"/>
</dbReference>
<dbReference type="GO" id="GO:0003735">
    <property type="term" value="F:structural constituent of ribosome"/>
    <property type="evidence" value="ECO:0007669"/>
    <property type="project" value="InterPro"/>
</dbReference>
<dbReference type="GO" id="GO:0016740">
    <property type="term" value="F:transferase activity"/>
    <property type="evidence" value="ECO:0007669"/>
    <property type="project" value="InterPro"/>
</dbReference>
<dbReference type="GO" id="GO:0002181">
    <property type="term" value="P:cytoplasmic translation"/>
    <property type="evidence" value="ECO:0007669"/>
    <property type="project" value="TreeGrafter"/>
</dbReference>
<dbReference type="FunFam" id="2.30.30.30:FF:000001">
    <property type="entry name" value="50S ribosomal protein L2"/>
    <property type="match status" value="1"/>
</dbReference>
<dbReference type="FunFam" id="2.40.50.140:FF:000003">
    <property type="entry name" value="50S ribosomal protein L2"/>
    <property type="match status" value="1"/>
</dbReference>
<dbReference type="FunFam" id="4.10.950.10:FF:000001">
    <property type="entry name" value="50S ribosomal protein L2"/>
    <property type="match status" value="1"/>
</dbReference>
<dbReference type="Gene3D" id="2.30.30.30">
    <property type="match status" value="1"/>
</dbReference>
<dbReference type="Gene3D" id="2.40.50.140">
    <property type="entry name" value="Nucleic acid-binding proteins"/>
    <property type="match status" value="1"/>
</dbReference>
<dbReference type="Gene3D" id="4.10.950.10">
    <property type="entry name" value="Ribosomal protein L2, domain 3"/>
    <property type="match status" value="1"/>
</dbReference>
<dbReference type="HAMAP" id="MF_01320_B">
    <property type="entry name" value="Ribosomal_uL2_B"/>
    <property type="match status" value="1"/>
</dbReference>
<dbReference type="InterPro" id="IPR012340">
    <property type="entry name" value="NA-bd_OB-fold"/>
</dbReference>
<dbReference type="InterPro" id="IPR014722">
    <property type="entry name" value="Rib_uL2_dom2"/>
</dbReference>
<dbReference type="InterPro" id="IPR002171">
    <property type="entry name" value="Ribosomal_uL2"/>
</dbReference>
<dbReference type="InterPro" id="IPR005880">
    <property type="entry name" value="Ribosomal_uL2_bac/org-type"/>
</dbReference>
<dbReference type="InterPro" id="IPR022669">
    <property type="entry name" value="Ribosomal_uL2_C"/>
</dbReference>
<dbReference type="InterPro" id="IPR022671">
    <property type="entry name" value="Ribosomal_uL2_CS"/>
</dbReference>
<dbReference type="InterPro" id="IPR014726">
    <property type="entry name" value="Ribosomal_uL2_dom3"/>
</dbReference>
<dbReference type="InterPro" id="IPR022666">
    <property type="entry name" value="Ribosomal_uL2_RNA-bd_dom"/>
</dbReference>
<dbReference type="InterPro" id="IPR008991">
    <property type="entry name" value="Translation_prot_SH3-like_sf"/>
</dbReference>
<dbReference type="NCBIfam" id="TIGR01171">
    <property type="entry name" value="rplB_bact"/>
    <property type="match status" value="1"/>
</dbReference>
<dbReference type="PANTHER" id="PTHR13691:SF5">
    <property type="entry name" value="LARGE RIBOSOMAL SUBUNIT PROTEIN UL2M"/>
    <property type="match status" value="1"/>
</dbReference>
<dbReference type="PANTHER" id="PTHR13691">
    <property type="entry name" value="RIBOSOMAL PROTEIN L2"/>
    <property type="match status" value="1"/>
</dbReference>
<dbReference type="Pfam" id="PF00181">
    <property type="entry name" value="Ribosomal_L2"/>
    <property type="match status" value="1"/>
</dbReference>
<dbReference type="Pfam" id="PF03947">
    <property type="entry name" value="Ribosomal_L2_C"/>
    <property type="match status" value="1"/>
</dbReference>
<dbReference type="PIRSF" id="PIRSF002158">
    <property type="entry name" value="Ribosomal_L2"/>
    <property type="match status" value="1"/>
</dbReference>
<dbReference type="SMART" id="SM01383">
    <property type="entry name" value="Ribosomal_L2"/>
    <property type="match status" value="1"/>
</dbReference>
<dbReference type="SMART" id="SM01382">
    <property type="entry name" value="Ribosomal_L2_C"/>
    <property type="match status" value="1"/>
</dbReference>
<dbReference type="SUPFAM" id="SSF50249">
    <property type="entry name" value="Nucleic acid-binding proteins"/>
    <property type="match status" value="1"/>
</dbReference>
<dbReference type="SUPFAM" id="SSF50104">
    <property type="entry name" value="Translation proteins SH3-like domain"/>
    <property type="match status" value="1"/>
</dbReference>
<dbReference type="PROSITE" id="PS00467">
    <property type="entry name" value="RIBOSOMAL_L2"/>
    <property type="match status" value="1"/>
</dbReference>
<sequence>MAIRKYKPTTSGRRGASVSDFTDITRTKPEKALMRSLHGHGGRNVHGRITTRHKGGGHKRAYRLIDFRRNDTDGVNAKVAHIEYDPNRTANIALLHFLDGKKRYILAPQGLSQGDVVESGANADIKPGNNLPLRNIPAGTLIHAVELRPGGGAKLARSAGSSIQLLGKESSYASLRMPSGEIRRVDVRCRATVGEVGNAEQANINWGKAGRMRWKGKRPSVRGVVMNPVDHPHGGGEGKTSGGRHPVSPWGKPEGRTRKPNKSSNKLIVRRRRTGKKHAR</sequence>
<comment type="function">
    <text evidence="1">One of the primary rRNA binding proteins. Required for association of the 30S and 50S subunits to form the 70S ribosome, for tRNA binding and peptide bond formation. It has been suggested to have peptidyltransferase activity; this is somewhat controversial. Makes several contacts with the 16S rRNA in the 70S ribosome.</text>
</comment>
<comment type="subunit">
    <text evidence="1">Part of the 50S ribosomal subunit. Forms a bridge to the 30S subunit in the 70S ribosome.</text>
</comment>
<comment type="similarity">
    <text evidence="1">Belongs to the universal ribosomal protein uL2 family.</text>
</comment>
<feature type="chain" id="PRO_1000165761" description="Large ribosomal subunit protein uL2">
    <location>
        <begin position="1"/>
        <end position="280"/>
    </location>
</feature>
<feature type="region of interest" description="Disordered" evidence="2">
    <location>
        <begin position="213"/>
        <end position="280"/>
    </location>
</feature>
<feature type="compositionally biased region" description="Basic residues" evidence="2">
    <location>
        <begin position="268"/>
        <end position="280"/>
    </location>
</feature>
<accession>B8ZSB6</accession>
<organism>
    <name type="scientific">Mycobacterium leprae (strain Br4923)</name>
    <dbReference type="NCBI Taxonomy" id="561304"/>
    <lineage>
        <taxon>Bacteria</taxon>
        <taxon>Bacillati</taxon>
        <taxon>Actinomycetota</taxon>
        <taxon>Actinomycetes</taxon>
        <taxon>Mycobacteriales</taxon>
        <taxon>Mycobacteriaceae</taxon>
        <taxon>Mycobacterium</taxon>
    </lineage>
</organism>
<proteinExistence type="inferred from homology"/>
<name>RL2_MYCLB</name>
<protein>
    <recommendedName>
        <fullName evidence="1">Large ribosomal subunit protein uL2</fullName>
    </recommendedName>
    <alternativeName>
        <fullName evidence="3">50S ribosomal protein L2</fullName>
    </alternativeName>
</protein>
<evidence type="ECO:0000255" key="1">
    <source>
        <dbReference type="HAMAP-Rule" id="MF_01320"/>
    </source>
</evidence>
<evidence type="ECO:0000256" key="2">
    <source>
        <dbReference type="SAM" id="MobiDB-lite"/>
    </source>
</evidence>
<evidence type="ECO:0000305" key="3"/>
<keyword id="KW-0687">Ribonucleoprotein</keyword>
<keyword id="KW-0689">Ribosomal protein</keyword>
<keyword id="KW-0694">RNA-binding</keyword>
<keyword id="KW-0699">rRNA-binding</keyword>